<evidence type="ECO:0000255" key="1"/>
<evidence type="ECO:0000303" key="2">
    <source>
    </source>
</evidence>
<evidence type="ECO:0000305" key="3"/>
<evidence type="ECO:0000305" key="4">
    <source>
    </source>
</evidence>
<evidence type="ECO:0000312" key="5">
    <source>
        <dbReference type="EMBL" id="BAB10355.1"/>
    </source>
</evidence>
<comment type="subcellular location">
    <subcellularLocation>
        <location evidence="4">Secreted</location>
    </subcellularLocation>
</comment>
<comment type="similarity">
    <text evidence="3">Belongs to the plant self-incompatibility (S1) protein family.</text>
</comment>
<accession>Q9FJ04</accession>
<accession>F2Q9V6</accession>
<protein>
    <recommendedName>
        <fullName evidence="2">S-protein homolog 26</fullName>
    </recommendedName>
</protein>
<dbReference type="EMBL" id="AB016873">
    <property type="protein sequence ID" value="BAB10355.1"/>
    <property type="molecule type" value="Genomic_DNA"/>
</dbReference>
<dbReference type="EMBL" id="CP002688">
    <property type="status" value="NOT_ANNOTATED_CDS"/>
    <property type="molecule type" value="Genomic_DNA"/>
</dbReference>
<dbReference type="EMBL" id="FN691476">
    <property type="protein sequence ID" value="CBL43001.1"/>
    <property type="molecule type" value="Genomic_DNA"/>
</dbReference>
<dbReference type="Araport" id="AT5G37785"/>
<dbReference type="TAIR" id="AT5G37785"/>
<dbReference type="InParanoid" id="Q9FJ04"/>
<dbReference type="PRO" id="PR:Q9FJ04"/>
<dbReference type="Proteomes" id="UP000006548">
    <property type="component" value="Chromosome 5"/>
</dbReference>
<dbReference type="GO" id="GO:0005576">
    <property type="term" value="C:extracellular region"/>
    <property type="evidence" value="ECO:0007669"/>
    <property type="project" value="UniProtKB-SubCell"/>
</dbReference>
<dbReference type="GO" id="GO:0060320">
    <property type="term" value="P:rejection of self pollen"/>
    <property type="evidence" value="ECO:0007669"/>
    <property type="project" value="UniProtKB-KW"/>
</dbReference>
<dbReference type="InterPro" id="IPR010264">
    <property type="entry name" value="Self-incomp_S1"/>
</dbReference>
<dbReference type="PANTHER" id="PTHR31232">
    <property type="match status" value="1"/>
</dbReference>
<dbReference type="PANTHER" id="PTHR31232:SF35">
    <property type="entry name" value="S-PROTEIN HOMOLOG 26"/>
    <property type="match status" value="1"/>
</dbReference>
<dbReference type="Pfam" id="PF05938">
    <property type="entry name" value="Self-incomp_S1"/>
    <property type="match status" value="1"/>
</dbReference>
<organism>
    <name type="scientific">Arabidopsis thaliana</name>
    <name type="common">Mouse-ear cress</name>
    <dbReference type="NCBI Taxonomy" id="3702"/>
    <lineage>
        <taxon>Eukaryota</taxon>
        <taxon>Viridiplantae</taxon>
        <taxon>Streptophyta</taxon>
        <taxon>Embryophyta</taxon>
        <taxon>Tracheophyta</taxon>
        <taxon>Spermatophyta</taxon>
        <taxon>Magnoliopsida</taxon>
        <taxon>eudicotyledons</taxon>
        <taxon>Gunneridae</taxon>
        <taxon>Pentapetalae</taxon>
        <taxon>rosids</taxon>
        <taxon>malvids</taxon>
        <taxon>Brassicales</taxon>
        <taxon>Brassicaceae</taxon>
        <taxon>Camelineae</taxon>
        <taxon>Arabidopsis</taxon>
    </lineage>
</organism>
<keyword id="KW-1185">Reference proteome</keyword>
<keyword id="KW-0964">Secreted</keyword>
<keyword id="KW-0713">Self-incompatibility</keyword>
<keyword id="KW-0732">Signal</keyword>
<proteinExistence type="inferred from homology"/>
<feature type="signal peptide" evidence="1">
    <location>
        <begin position="1"/>
        <end position="25"/>
    </location>
</feature>
<feature type="chain" id="PRO_5004326414" description="S-protein homolog 26">
    <location>
        <begin position="26"/>
        <end position="189"/>
    </location>
</feature>
<gene>
    <name evidence="2" type="primary">SPH26</name>
    <name evidence="3" type="ordered locus">At5g37785</name>
    <name evidence="5" type="ORF">K22F20.3</name>
</gene>
<name>SPH26_ARATH</name>
<reference key="1">
    <citation type="journal article" date="1998" name="DNA Res.">
        <title>Structural analysis of Arabidopsis thaliana chromosome 5. VII. Sequence features of the regions of 1,013,767 bp covered by sixteen physically assigned P1 and TAC clones.</title>
        <authorList>
            <person name="Nakamura Y."/>
            <person name="Sato S."/>
            <person name="Asamizu E."/>
            <person name="Kaneko T."/>
            <person name="Kotani H."/>
            <person name="Miyajima N."/>
            <person name="Tabata S."/>
        </authorList>
    </citation>
    <scope>NUCLEOTIDE SEQUENCE [LARGE SCALE GENOMIC DNA]</scope>
    <source>
        <strain>cv. Columbia</strain>
    </source>
</reference>
<reference key="2">
    <citation type="journal article" date="2017" name="Plant J.">
        <title>Araport11: a complete reannotation of the Arabidopsis thaliana reference genome.</title>
        <authorList>
            <person name="Cheng C.Y."/>
            <person name="Krishnakumar V."/>
            <person name="Chan A.P."/>
            <person name="Thibaud-Nissen F."/>
            <person name="Schobel S."/>
            <person name="Town C.D."/>
        </authorList>
    </citation>
    <scope>GENOME REANNOTATION</scope>
    <source>
        <strain>cv. Columbia</strain>
    </source>
</reference>
<reference key="3">
    <citation type="submission" date="2011-03" db="EMBL/GenBank/DDBJ databases">
        <title>SPH: a novel family of secreted proteins with members implicated in plant defense regulation and development.</title>
        <authorList>
            <person name="Wheeler M.J."/>
            <person name="Bell E.M."/>
            <person name="Holub E.B."/>
            <person name="Ride J."/>
            <person name="Franklin-Tong V.E."/>
            <person name="Franklin F.H."/>
        </authorList>
    </citation>
    <scope>NUCLEOTIDE SEQUENCE [GENOMIC DNA] OF 4-189</scope>
    <source>
        <strain>cv. Columbia</strain>
    </source>
</reference>
<reference key="4">
    <citation type="journal article" date="1999" name="Plant Mol. Biol.">
        <title>Analysis of Arabidopsis genome sequence reveals a large new gene family in plants.</title>
        <authorList>
            <person name="Ride J.P."/>
            <person name="Davies E.M."/>
            <person name="Franklin F.C.H."/>
            <person name="Marshall D.F."/>
        </authorList>
    </citation>
    <scope>GENE FAMILY</scope>
    <scope>NOMENCLATURE</scope>
    <source>
        <strain>cv. Columbia</strain>
    </source>
</reference>
<sequence length="189" mass="22274">MISMNRLSILLFVFAFGLTMMSNTALSYKHSVWIRNFLHEKNDLIIHCKSTNHDMVYHRLHPTGSYHLLVDDDSDYFWCHLWQGPNFKHHQVFGVNHGDVWEAREDGIYFSQIKYARDLRQHVFMYGWNVPLTLSRASSLGLCCVSLSLLLSSLVLFYFYLVLVLKFIFFIMNFKNLIFICVGIFLFSL</sequence>